<proteinExistence type="inferred from homology"/>
<name>MRAY_FRAP2</name>
<reference key="1">
    <citation type="submission" date="2007-12" db="EMBL/GenBank/DDBJ databases">
        <title>Complete sequence of chromosome of Francisella philomiragia subsp. philomiragia ATCC 25017.</title>
        <authorList>
            <consortium name="US DOE Joint Genome Institute"/>
            <person name="Copeland A."/>
            <person name="Lucas S."/>
            <person name="Lapidus A."/>
            <person name="Barry K."/>
            <person name="Detter J.C."/>
            <person name="Glavina del Rio T."/>
            <person name="Hammon N."/>
            <person name="Israni S."/>
            <person name="Dalin E."/>
            <person name="Tice H."/>
            <person name="Pitluck S."/>
            <person name="Chain P."/>
            <person name="Malfatti S."/>
            <person name="Shin M."/>
            <person name="Vergez L."/>
            <person name="Schmutz J."/>
            <person name="Larimer F."/>
            <person name="Land M."/>
            <person name="Hauser L."/>
            <person name="Richardson P."/>
        </authorList>
    </citation>
    <scope>NUCLEOTIDE SEQUENCE [LARGE SCALE GENOMIC DNA]</scope>
    <source>
        <strain>ATCC 25017 / CCUG 19701 / FSC 153 / O#319-036</strain>
    </source>
</reference>
<comment type="function">
    <text evidence="1">Catalyzes the initial step of the lipid cycle reactions in the biosynthesis of the cell wall peptidoglycan: transfers peptidoglycan precursor phospho-MurNAc-pentapeptide from UDP-MurNAc-pentapeptide onto the lipid carrier undecaprenyl phosphate, yielding undecaprenyl-pyrophosphoryl-MurNAc-pentapeptide, known as lipid I.</text>
</comment>
<comment type="catalytic activity">
    <reaction evidence="1">
        <text>UDP-N-acetyl-alpha-D-muramoyl-L-alanyl-gamma-D-glutamyl-meso-2,6-diaminopimeloyl-D-alanyl-D-alanine + di-trans,octa-cis-undecaprenyl phosphate = di-trans,octa-cis-undecaprenyl diphospho-N-acetyl-alpha-D-muramoyl-L-alanyl-D-glutamyl-meso-2,6-diaminopimeloyl-D-alanyl-D-alanine + UMP</text>
        <dbReference type="Rhea" id="RHEA:28386"/>
        <dbReference type="ChEBI" id="CHEBI:57865"/>
        <dbReference type="ChEBI" id="CHEBI:60392"/>
        <dbReference type="ChEBI" id="CHEBI:61386"/>
        <dbReference type="ChEBI" id="CHEBI:61387"/>
        <dbReference type="EC" id="2.7.8.13"/>
    </reaction>
</comment>
<comment type="cofactor">
    <cofactor evidence="1">
        <name>Mg(2+)</name>
        <dbReference type="ChEBI" id="CHEBI:18420"/>
    </cofactor>
</comment>
<comment type="pathway">
    <text evidence="1">Cell wall biogenesis; peptidoglycan biosynthesis.</text>
</comment>
<comment type="subcellular location">
    <subcellularLocation>
        <location evidence="1">Cell inner membrane</location>
        <topology evidence="1">Multi-pass membrane protein</topology>
    </subcellularLocation>
</comment>
<comment type="similarity">
    <text evidence="1">Belongs to the glycosyltransferase 4 family. MraY subfamily.</text>
</comment>
<protein>
    <recommendedName>
        <fullName evidence="1">Phospho-N-acetylmuramoyl-pentapeptide-transferase</fullName>
        <ecNumber evidence="1">2.7.8.13</ecNumber>
    </recommendedName>
    <alternativeName>
        <fullName evidence="1">UDP-MurNAc-pentapeptide phosphotransferase</fullName>
    </alternativeName>
</protein>
<organism>
    <name type="scientific">Francisella philomiragia subsp. philomiragia (strain ATCC 25017 / CCUG 19701 / FSC 153 / O#319-036)</name>
    <dbReference type="NCBI Taxonomy" id="484022"/>
    <lineage>
        <taxon>Bacteria</taxon>
        <taxon>Pseudomonadati</taxon>
        <taxon>Pseudomonadota</taxon>
        <taxon>Gammaproteobacteria</taxon>
        <taxon>Thiotrichales</taxon>
        <taxon>Francisellaceae</taxon>
        <taxon>Francisella</taxon>
    </lineage>
</organism>
<sequence length="365" mass="40757">MLIYLFNWLSHYYKGLEVFSSYVSVRIIMISITSLLITLFLGRPMIRWLQKMQIGQVVRDDGPQSHFSKRNTPTMGGVLILSSVIISALLWGSLSSIYLWILILVVIFFGAIGFFDDYLKLVLKHPKGLRAKHKFALQSIFSIILAIVLFYLLSKNGQMNLSIPFTKNLHIPMGIFLFVVLTFFIINGSSNAVNLTDGLDGLAIVPVVLVAAGLGIYAYIQTNSVLANYLLFPYINNQGLAEVAVFCAALCGSGLAFLWFNSHPAEVFMGDVGSLTLGAVLGVIAVMIRQELIFFIMGLLFVVEALSVMLQVGSYKLRNGKRIFKMAPIHHHFELMGWPETKVVIRFWIVSLILFLIGLVAIKVR</sequence>
<accession>B0TZ73</accession>
<gene>
    <name evidence="1" type="primary">mraY</name>
    <name type="ordered locus">Fphi_0296</name>
</gene>
<keyword id="KW-0131">Cell cycle</keyword>
<keyword id="KW-0132">Cell division</keyword>
<keyword id="KW-0997">Cell inner membrane</keyword>
<keyword id="KW-1003">Cell membrane</keyword>
<keyword id="KW-0133">Cell shape</keyword>
<keyword id="KW-0961">Cell wall biogenesis/degradation</keyword>
<keyword id="KW-0460">Magnesium</keyword>
<keyword id="KW-0472">Membrane</keyword>
<keyword id="KW-0479">Metal-binding</keyword>
<keyword id="KW-0573">Peptidoglycan synthesis</keyword>
<keyword id="KW-0808">Transferase</keyword>
<keyword id="KW-0812">Transmembrane</keyword>
<keyword id="KW-1133">Transmembrane helix</keyword>
<evidence type="ECO:0000255" key="1">
    <source>
        <dbReference type="HAMAP-Rule" id="MF_00038"/>
    </source>
</evidence>
<feature type="chain" id="PRO_1000074544" description="Phospho-N-acetylmuramoyl-pentapeptide-transferase">
    <location>
        <begin position="1"/>
        <end position="365"/>
    </location>
</feature>
<feature type="transmembrane region" description="Helical" evidence="1">
    <location>
        <begin position="22"/>
        <end position="42"/>
    </location>
</feature>
<feature type="transmembrane region" description="Helical" evidence="1">
    <location>
        <begin position="74"/>
        <end position="94"/>
    </location>
</feature>
<feature type="transmembrane region" description="Helical" evidence="1">
    <location>
        <begin position="95"/>
        <end position="115"/>
    </location>
</feature>
<feature type="transmembrane region" description="Helical" evidence="1">
    <location>
        <begin position="134"/>
        <end position="154"/>
    </location>
</feature>
<feature type="transmembrane region" description="Helical" evidence="1">
    <location>
        <begin position="169"/>
        <end position="189"/>
    </location>
</feature>
<feature type="transmembrane region" description="Helical" evidence="1">
    <location>
        <begin position="201"/>
        <end position="221"/>
    </location>
</feature>
<feature type="transmembrane region" description="Helical" evidence="1">
    <location>
        <begin position="240"/>
        <end position="260"/>
    </location>
</feature>
<feature type="transmembrane region" description="Helical" evidence="1">
    <location>
        <begin position="268"/>
        <end position="288"/>
    </location>
</feature>
<feature type="transmembrane region" description="Helical" evidence="1">
    <location>
        <begin position="292"/>
        <end position="312"/>
    </location>
</feature>
<feature type="transmembrane region" description="Helical" evidence="1">
    <location>
        <begin position="342"/>
        <end position="362"/>
    </location>
</feature>
<dbReference type="EC" id="2.7.8.13" evidence="1"/>
<dbReference type="EMBL" id="CP000937">
    <property type="protein sequence ID" value="ABZ86512.1"/>
    <property type="molecule type" value="Genomic_DNA"/>
</dbReference>
<dbReference type="SMR" id="B0TZ73"/>
<dbReference type="KEGG" id="fph:Fphi_0296"/>
<dbReference type="eggNOG" id="COG0472">
    <property type="taxonomic scope" value="Bacteria"/>
</dbReference>
<dbReference type="HOGENOM" id="CLU_023982_0_0_6"/>
<dbReference type="UniPathway" id="UPA00219"/>
<dbReference type="GO" id="GO:0005886">
    <property type="term" value="C:plasma membrane"/>
    <property type="evidence" value="ECO:0007669"/>
    <property type="project" value="UniProtKB-SubCell"/>
</dbReference>
<dbReference type="GO" id="GO:0046872">
    <property type="term" value="F:metal ion binding"/>
    <property type="evidence" value="ECO:0007669"/>
    <property type="project" value="UniProtKB-KW"/>
</dbReference>
<dbReference type="GO" id="GO:0008963">
    <property type="term" value="F:phospho-N-acetylmuramoyl-pentapeptide-transferase activity"/>
    <property type="evidence" value="ECO:0007669"/>
    <property type="project" value="UniProtKB-UniRule"/>
</dbReference>
<dbReference type="GO" id="GO:0051992">
    <property type="term" value="F:UDP-N-acetylmuramoyl-L-alanyl-D-glutamyl-meso-2,6-diaminopimelyl-D-alanyl-D-alanine:undecaprenyl-phosphate transferase activity"/>
    <property type="evidence" value="ECO:0007669"/>
    <property type="project" value="RHEA"/>
</dbReference>
<dbReference type="GO" id="GO:0051301">
    <property type="term" value="P:cell division"/>
    <property type="evidence" value="ECO:0007669"/>
    <property type="project" value="UniProtKB-KW"/>
</dbReference>
<dbReference type="GO" id="GO:0071555">
    <property type="term" value="P:cell wall organization"/>
    <property type="evidence" value="ECO:0007669"/>
    <property type="project" value="UniProtKB-KW"/>
</dbReference>
<dbReference type="GO" id="GO:0009252">
    <property type="term" value="P:peptidoglycan biosynthetic process"/>
    <property type="evidence" value="ECO:0007669"/>
    <property type="project" value="UniProtKB-UniRule"/>
</dbReference>
<dbReference type="GO" id="GO:0008360">
    <property type="term" value="P:regulation of cell shape"/>
    <property type="evidence" value="ECO:0007669"/>
    <property type="project" value="UniProtKB-KW"/>
</dbReference>
<dbReference type="CDD" id="cd06852">
    <property type="entry name" value="GT_MraY"/>
    <property type="match status" value="1"/>
</dbReference>
<dbReference type="HAMAP" id="MF_00038">
    <property type="entry name" value="MraY"/>
    <property type="match status" value="1"/>
</dbReference>
<dbReference type="InterPro" id="IPR000715">
    <property type="entry name" value="Glycosyl_transferase_4"/>
</dbReference>
<dbReference type="InterPro" id="IPR003524">
    <property type="entry name" value="PNAcMuramoyl-5peptid_Trfase"/>
</dbReference>
<dbReference type="InterPro" id="IPR018480">
    <property type="entry name" value="PNAcMuramoyl-5peptid_Trfase_CS"/>
</dbReference>
<dbReference type="NCBIfam" id="TIGR00445">
    <property type="entry name" value="mraY"/>
    <property type="match status" value="1"/>
</dbReference>
<dbReference type="PANTHER" id="PTHR22926">
    <property type="entry name" value="PHOSPHO-N-ACETYLMURAMOYL-PENTAPEPTIDE-TRANSFERASE"/>
    <property type="match status" value="1"/>
</dbReference>
<dbReference type="PANTHER" id="PTHR22926:SF5">
    <property type="entry name" value="PHOSPHO-N-ACETYLMURAMOYL-PENTAPEPTIDE-TRANSFERASE HOMOLOG"/>
    <property type="match status" value="1"/>
</dbReference>
<dbReference type="Pfam" id="PF00953">
    <property type="entry name" value="Glycos_transf_4"/>
    <property type="match status" value="1"/>
</dbReference>
<dbReference type="Pfam" id="PF10555">
    <property type="entry name" value="MraY_sig1"/>
    <property type="match status" value="1"/>
</dbReference>
<dbReference type="PROSITE" id="PS01347">
    <property type="entry name" value="MRAY_1"/>
    <property type="match status" value="1"/>
</dbReference>
<dbReference type="PROSITE" id="PS01348">
    <property type="entry name" value="MRAY_2"/>
    <property type="match status" value="1"/>
</dbReference>